<reference key="1">
    <citation type="journal article" date="2002" name="Environ. Microbiol.">
        <title>Complete genome sequence and comparative analysis of the metabolically versatile Pseudomonas putida KT2440.</title>
        <authorList>
            <person name="Nelson K.E."/>
            <person name="Weinel C."/>
            <person name="Paulsen I.T."/>
            <person name="Dodson R.J."/>
            <person name="Hilbert H."/>
            <person name="Martins dos Santos V.A.P."/>
            <person name="Fouts D.E."/>
            <person name="Gill S.R."/>
            <person name="Pop M."/>
            <person name="Holmes M."/>
            <person name="Brinkac L.M."/>
            <person name="Beanan M.J."/>
            <person name="DeBoy R.T."/>
            <person name="Daugherty S.C."/>
            <person name="Kolonay J.F."/>
            <person name="Madupu R."/>
            <person name="Nelson W.C."/>
            <person name="White O."/>
            <person name="Peterson J.D."/>
            <person name="Khouri H.M."/>
            <person name="Hance I."/>
            <person name="Chris Lee P."/>
            <person name="Holtzapple E.K."/>
            <person name="Scanlan D."/>
            <person name="Tran K."/>
            <person name="Moazzez A."/>
            <person name="Utterback T.R."/>
            <person name="Rizzo M."/>
            <person name="Lee K."/>
            <person name="Kosack D."/>
            <person name="Moestl D."/>
            <person name="Wedler H."/>
            <person name="Lauber J."/>
            <person name="Stjepandic D."/>
            <person name="Hoheisel J."/>
            <person name="Straetz M."/>
            <person name="Heim S."/>
            <person name="Kiewitz C."/>
            <person name="Eisen J.A."/>
            <person name="Timmis K.N."/>
            <person name="Duesterhoeft A."/>
            <person name="Tuemmler B."/>
            <person name="Fraser C.M."/>
        </authorList>
    </citation>
    <scope>NUCLEOTIDE SEQUENCE [LARGE SCALE GENOMIC DNA]</scope>
    <source>
        <strain>ATCC 47054 / DSM 6125 / CFBP 8728 / NCIMB 11950 / KT2440</strain>
    </source>
</reference>
<comment type="function">
    <text evidence="2">One of the essential components for the initiation of protein synthesis. Protects formylmethionyl-tRNA from spontaneous hydrolysis and promotes its binding to the 30S ribosomal subunits. Also involved in the hydrolysis of GTP during the formation of the 70S ribosomal complex.</text>
</comment>
<comment type="subcellular location">
    <subcellularLocation>
        <location evidence="2">Cytoplasm</location>
    </subcellularLocation>
</comment>
<comment type="similarity">
    <text evidence="2">Belongs to the TRAFAC class translation factor GTPase superfamily. Classic translation factor GTPase family. IF-2 subfamily.</text>
</comment>
<gene>
    <name evidence="2" type="primary">infB</name>
    <name type="ordered locus">PP_4712</name>
</gene>
<feature type="chain" id="PRO_0000137237" description="Translation initiation factor IF-2">
    <location>
        <begin position="1"/>
        <end position="846"/>
    </location>
</feature>
<feature type="domain" description="tr-type G">
    <location>
        <begin position="346"/>
        <end position="513"/>
    </location>
</feature>
<feature type="region of interest" description="Disordered" evidence="3">
    <location>
        <begin position="94"/>
        <end position="263"/>
    </location>
</feature>
<feature type="region of interest" description="G1" evidence="1">
    <location>
        <begin position="355"/>
        <end position="362"/>
    </location>
</feature>
<feature type="region of interest" description="G2" evidence="1">
    <location>
        <begin position="380"/>
        <end position="384"/>
    </location>
</feature>
<feature type="region of interest" description="G3" evidence="1">
    <location>
        <begin position="401"/>
        <end position="404"/>
    </location>
</feature>
<feature type="region of interest" description="G4" evidence="1">
    <location>
        <begin position="455"/>
        <end position="458"/>
    </location>
</feature>
<feature type="region of interest" description="G5" evidence="1">
    <location>
        <begin position="491"/>
        <end position="493"/>
    </location>
</feature>
<feature type="compositionally biased region" description="Basic and acidic residues" evidence="3">
    <location>
        <begin position="96"/>
        <end position="135"/>
    </location>
</feature>
<feature type="compositionally biased region" description="Low complexity" evidence="3">
    <location>
        <begin position="136"/>
        <end position="148"/>
    </location>
</feature>
<feature type="compositionally biased region" description="Low complexity" evidence="3">
    <location>
        <begin position="158"/>
        <end position="176"/>
    </location>
</feature>
<feature type="compositionally biased region" description="Basic and acidic residues" evidence="3">
    <location>
        <begin position="177"/>
        <end position="206"/>
    </location>
</feature>
<feature type="compositionally biased region" description="Basic and acidic residues" evidence="3">
    <location>
        <begin position="230"/>
        <end position="239"/>
    </location>
</feature>
<feature type="compositionally biased region" description="Basic residues" evidence="3">
    <location>
        <begin position="240"/>
        <end position="253"/>
    </location>
</feature>
<feature type="binding site" evidence="2">
    <location>
        <begin position="355"/>
        <end position="362"/>
    </location>
    <ligand>
        <name>GTP</name>
        <dbReference type="ChEBI" id="CHEBI:37565"/>
    </ligand>
</feature>
<feature type="binding site" evidence="2">
    <location>
        <begin position="401"/>
        <end position="405"/>
    </location>
    <ligand>
        <name>GTP</name>
        <dbReference type="ChEBI" id="CHEBI:37565"/>
    </ligand>
</feature>
<feature type="binding site" evidence="2">
    <location>
        <begin position="455"/>
        <end position="458"/>
    </location>
    <ligand>
        <name>GTP</name>
        <dbReference type="ChEBI" id="CHEBI:37565"/>
    </ligand>
</feature>
<evidence type="ECO:0000250" key="1"/>
<evidence type="ECO:0000255" key="2">
    <source>
        <dbReference type="HAMAP-Rule" id="MF_00100"/>
    </source>
</evidence>
<evidence type="ECO:0000256" key="3">
    <source>
        <dbReference type="SAM" id="MobiDB-lite"/>
    </source>
</evidence>
<dbReference type="EMBL" id="AE015451">
    <property type="protein sequence ID" value="AAN70284.1"/>
    <property type="molecule type" value="Genomic_DNA"/>
</dbReference>
<dbReference type="RefSeq" id="NP_746820.1">
    <property type="nucleotide sequence ID" value="NC_002947.4"/>
</dbReference>
<dbReference type="RefSeq" id="WP_003249965.1">
    <property type="nucleotide sequence ID" value="NZ_CP169744.1"/>
</dbReference>
<dbReference type="SMR" id="Q88DV7"/>
<dbReference type="STRING" id="160488.PP_4712"/>
<dbReference type="PaxDb" id="160488-PP_4712"/>
<dbReference type="GeneID" id="83682426"/>
<dbReference type="KEGG" id="ppu:PP_4712"/>
<dbReference type="PATRIC" id="fig|160488.4.peg.5022"/>
<dbReference type="eggNOG" id="COG0532">
    <property type="taxonomic scope" value="Bacteria"/>
</dbReference>
<dbReference type="HOGENOM" id="CLU_006301_6_1_6"/>
<dbReference type="OrthoDB" id="9811804at2"/>
<dbReference type="PhylomeDB" id="Q88DV7"/>
<dbReference type="BioCyc" id="PPUT160488:G1G01-5035-MONOMER"/>
<dbReference type="Proteomes" id="UP000000556">
    <property type="component" value="Chromosome"/>
</dbReference>
<dbReference type="GO" id="GO:0005829">
    <property type="term" value="C:cytosol"/>
    <property type="evidence" value="ECO:0007669"/>
    <property type="project" value="TreeGrafter"/>
</dbReference>
<dbReference type="GO" id="GO:0005525">
    <property type="term" value="F:GTP binding"/>
    <property type="evidence" value="ECO:0007669"/>
    <property type="project" value="UniProtKB-KW"/>
</dbReference>
<dbReference type="GO" id="GO:0003924">
    <property type="term" value="F:GTPase activity"/>
    <property type="evidence" value="ECO:0007669"/>
    <property type="project" value="UniProtKB-UniRule"/>
</dbReference>
<dbReference type="GO" id="GO:0003743">
    <property type="term" value="F:translation initiation factor activity"/>
    <property type="evidence" value="ECO:0007669"/>
    <property type="project" value="UniProtKB-UniRule"/>
</dbReference>
<dbReference type="CDD" id="cd01887">
    <property type="entry name" value="IF2_eIF5B"/>
    <property type="match status" value="1"/>
</dbReference>
<dbReference type="CDD" id="cd03702">
    <property type="entry name" value="IF2_mtIF2_II"/>
    <property type="match status" value="1"/>
</dbReference>
<dbReference type="CDD" id="cd03692">
    <property type="entry name" value="mtIF2_IVc"/>
    <property type="match status" value="1"/>
</dbReference>
<dbReference type="FunFam" id="2.40.30.10:FF:000007">
    <property type="entry name" value="Translation initiation factor IF-2"/>
    <property type="match status" value="1"/>
</dbReference>
<dbReference type="FunFam" id="2.40.30.10:FF:000008">
    <property type="entry name" value="Translation initiation factor IF-2"/>
    <property type="match status" value="1"/>
</dbReference>
<dbReference type="FunFam" id="3.40.50.10050:FF:000001">
    <property type="entry name" value="Translation initiation factor IF-2"/>
    <property type="match status" value="1"/>
</dbReference>
<dbReference type="FunFam" id="3.40.50.300:FF:000019">
    <property type="entry name" value="Translation initiation factor IF-2"/>
    <property type="match status" value="1"/>
</dbReference>
<dbReference type="Gene3D" id="3.40.50.300">
    <property type="entry name" value="P-loop containing nucleotide triphosphate hydrolases"/>
    <property type="match status" value="1"/>
</dbReference>
<dbReference type="Gene3D" id="3.30.56.50">
    <property type="entry name" value="Putative DNA-binding domain, N-terminal subdomain of bacterial translation initiation factor IF2"/>
    <property type="match status" value="1"/>
</dbReference>
<dbReference type="Gene3D" id="2.40.30.10">
    <property type="entry name" value="Translation factors"/>
    <property type="match status" value="2"/>
</dbReference>
<dbReference type="Gene3D" id="3.40.50.10050">
    <property type="entry name" value="Translation initiation factor IF- 2, domain 3"/>
    <property type="match status" value="1"/>
</dbReference>
<dbReference type="HAMAP" id="MF_00100_B">
    <property type="entry name" value="IF_2_B"/>
    <property type="match status" value="1"/>
</dbReference>
<dbReference type="InterPro" id="IPR009061">
    <property type="entry name" value="DNA-bd_dom_put_sf"/>
</dbReference>
<dbReference type="InterPro" id="IPR053905">
    <property type="entry name" value="EF-G-like_DII"/>
</dbReference>
<dbReference type="InterPro" id="IPR013575">
    <property type="entry name" value="IF2_assoc_dom_bac"/>
</dbReference>
<dbReference type="InterPro" id="IPR044145">
    <property type="entry name" value="IF2_II"/>
</dbReference>
<dbReference type="InterPro" id="IPR006847">
    <property type="entry name" value="IF2_N"/>
</dbReference>
<dbReference type="InterPro" id="IPR027417">
    <property type="entry name" value="P-loop_NTPase"/>
</dbReference>
<dbReference type="InterPro" id="IPR005225">
    <property type="entry name" value="Small_GTP-bd"/>
</dbReference>
<dbReference type="InterPro" id="IPR000795">
    <property type="entry name" value="T_Tr_GTP-bd_dom"/>
</dbReference>
<dbReference type="InterPro" id="IPR000178">
    <property type="entry name" value="TF_IF2_bacterial-like"/>
</dbReference>
<dbReference type="InterPro" id="IPR015760">
    <property type="entry name" value="TIF_IF2"/>
</dbReference>
<dbReference type="InterPro" id="IPR023115">
    <property type="entry name" value="TIF_IF2_dom3"/>
</dbReference>
<dbReference type="InterPro" id="IPR036925">
    <property type="entry name" value="TIF_IF2_dom3_sf"/>
</dbReference>
<dbReference type="InterPro" id="IPR009000">
    <property type="entry name" value="Transl_B-barrel_sf"/>
</dbReference>
<dbReference type="NCBIfam" id="TIGR00487">
    <property type="entry name" value="IF-2"/>
    <property type="match status" value="1"/>
</dbReference>
<dbReference type="NCBIfam" id="TIGR00231">
    <property type="entry name" value="small_GTP"/>
    <property type="match status" value="1"/>
</dbReference>
<dbReference type="PANTHER" id="PTHR43381:SF5">
    <property type="entry name" value="TR-TYPE G DOMAIN-CONTAINING PROTEIN"/>
    <property type="match status" value="1"/>
</dbReference>
<dbReference type="PANTHER" id="PTHR43381">
    <property type="entry name" value="TRANSLATION INITIATION FACTOR IF-2-RELATED"/>
    <property type="match status" value="1"/>
</dbReference>
<dbReference type="Pfam" id="PF22042">
    <property type="entry name" value="EF-G_D2"/>
    <property type="match status" value="1"/>
</dbReference>
<dbReference type="Pfam" id="PF00009">
    <property type="entry name" value="GTP_EFTU"/>
    <property type="match status" value="1"/>
</dbReference>
<dbReference type="Pfam" id="PF11987">
    <property type="entry name" value="IF-2"/>
    <property type="match status" value="1"/>
</dbReference>
<dbReference type="Pfam" id="PF08364">
    <property type="entry name" value="IF2_assoc"/>
    <property type="match status" value="1"/>
</dbReference>
<dbReference type="Pfam" id="PF04760">
    <property type="entry name" value="IF2_N"/>
    <property type="match status" value="2"/>
</dbReference>
<dbReference type="SUPFAM" id="SSF52156">
    <property type="entry name" value="Initiation factor IF2/eIF5b, domain 3"/>
    <property type="match status" value="1"/>
</dbReference>
<dbReference type="SUPFAM" id="SSF52540">
    <property type="entry name" value="P-loop containing nucleoside triphosphate hydrolases"/>
    <property type="match status" value="1"/>
</dbReference>
<dbReference type="SUPFAM" id="SSF46955">
    <property type="entry name" value="Putative DNA-binding domain"/>
    <property type="match status" value="1"/>
</dbReference>
<dbReference type="SUPFAM" id="SSF50447">
    <property type="entry name" value="Translation proteins"/>
    <property type="match status" value="2"/>
</dbReference>
<dbReference type="PROSITE" id="PS51722">
    <property type="entry name" value="G_TR_2"/>
    <property type="match status" value="1"/>
</dbReference>
<dbReference type="PROSITE" id="PS01176">
    <property type="entry name" value="IF2"/>
    <property type="match status" value="1"/>
</dbReference>
<organism>
    <name type="scientific">Pseudomonas putida (strain ATCC 47054 / DSM 6125 / CFBP 8728 / NCIMB 11950 / KT2440)</name>
    <dbReference type="NCBI Taxonomy" id="160488"/>
    <lineage>
        <taxon>Bacteria</taxon>
        <taxon>Pseudomonadati</taxon>
        <taxon>Pseudomonadota</taxon>
        <taxon>Gammaproteobacteria</taxon>
        <taxon>Pseudomonadales</taxon>
        <taxon>Pseudomonadaceae</taxon>
        <taxon>Pseudomonas</taxon>
    </lineage>
</organism>
<sequence>MTQVTVKELAQEVEAPVERLLQQMREAGLPHTDAGQVVTDNEKQTLLTHLKSSHKSKAEEPRKITLQRKTTSTLRVAGSKSISVEVRKKKVFVQRSPEEIQAEQKRELDERRAAENAARDKVEAEVRQRNEEQARRQAAGSAAAAPAPAAKPEPAPAAAPVAAPAPVVADAPASEDAAARAAERKKDETRRNESRTRDDDRRRGEAPRVSIKVKVKEKEKAPTPRAAPRTTDEESDGARRGRGGKSKLKKRNQHGFQNPTGPVIRDVTIGETITVSELANQMSVKGAEVVKFMFKMGTPVTINQVLDQETAQLIAEELGHKVTLVSDTALEDSLAESLKFEGQTESRAPVVTVMGHVDHGKTSLLDYIRRAKVAAGEAGGITQHIGAYHVETDRGMVTFLDTPGHAAFTQMRARGAKATDIVILVVAADDGVMPQTREAVQHAKAAGVPLVVAVNKIDKPGADLDRIRNELSVEGVTSEDWGGDTPFVKVSAKMGTGVDELLEAVLLQAEILELTATPTAPGRGVVVESRLDKGRGPVATILVQDGTLRQGDMVLCGSNYGRVRAMLDENGKPVKEAGPSIPVEILGLDGTPEAGDELSVVADEKKAREVALFRQGKYREVKLARAHAGKLENIFETMGQEEKKTLNIVLKTDVRGSLEALQGSLGGLGNDEVQVRVIGGGVGGITESDANLALASNAVLFGFNVRADAGARKIVEQEGLDMRYYNVIYDIIEDVKKALTGMLGSDVRENILGVAEVRDVFRSPKFGAIAGCMVIEGTVYRNRPIRVLRDDVVIFEGELESLRRFKDDASEVRSGMECGIGVKSYNDVKVGDKIEVFEKVQVARTL</sequence>
<proteinExistence type="inferred from homology"/>
<protein>
    <recommendedName>
        <fullName evidence="2">Translation initiation factor IF-2</fullName>
    </recommendedName>
</protein>
<name>IF2_PSEPK</name>
<keyword id="KW-0963">Cytoplasm</keyword>
<keyword id="KW-0342">GTP-binding</keyword>
<keyword id="KW-0396">Initiation factor</keyword>
<keyword id="KW-0547">Nucleotide-binding</keyword>
<keyword id="KW-0648">Protein biosynthesis</keyword>
<keyword id="KW-1185">Reference proteome</keyword>
<accession>Q88DV7</accession>